<name>SYC_STAA1</name>
<organism>
    <name type="scientific">Staphylococcus aureus (strain Mu3 / ATCC 700698)</name>
    <dbReference type="NCBI Taxonomy" id="418127"/>
    <lineage>
        <taxon>Bacteria</taxon>
        <taxon>Bacillati</taxon>
        <taxon>Bacillota</taxon>
        <taxon>Bacilli</taxon>
        <taxon>Bacillales</taxon>
        <taxon>Staphylococcaceae</taxon>
        <taxon>Staphylococcus</taxon>
    </lineage>
</organism>
<comment type="catalytic activity">
    <reaction evidence="1">
        <text>tRNA(Cys) + L-cysteine + ATP = L-cysteinyl-tRNA(Cys) + AMP + diphosphate</text>
        <dbReference type="Rhea" id="RHEA:17773"/>
        <dbReference type="Rhea" id="RHEA-COMP:9661"/>
        <dbReference type="Rhea" id="RHEA-COMP:9679"/>
        <dbReference type="ChEBI" id="CHEBI:30616"/>
        <dbReference type="ChEBI" id="CHEBI:33019"/>
        <dbReference type="ChEBI" id="CHEBI:35235"/>
        <dbReference type="ChEBI" id="CHEBI:78442"/>
        <dbReference type="ChEBI" id="CHEBI:78517"/>
        <dbReference type="ChEBI" id="CHEBI:456215"/>
        <dbReference type="EC" id="6.1.1.16"/>
    </reaction>
</comment>
<comment type="cofactor">
    <cofactor evidence="1">
        <name>Zn(2+)</name>
        <dbReference type="ChEBI" id="CHEBI:29105"/>
    </cofactor>
    <text evidence="1">Binds 1 zinc ion per subunit.</text>
</comment>
<comment type="subunit">
    <text evidence="1">Monomer.</text>
</comment>
<comment type="subcellular location">
    <subcellularLocation>
        <location evidence="1">Cytoplasm</location>
    </subcellularLocation>
</comment>
<comment type="similarity">
    <text evidence="1">Belongs to the class-I aminoacyl-tRNA synthetase family.</text>
</comment>
<reference key="1">
    <citation type="journal article" date="2008" name="Antimicrob. Agents Chemother.">
        <title>Mutated response regulator graR is responsible for phenotypic conversion of Staphylococcus aureus from heterogeneous vancomycin-intermediate resistance to vancomycin-intermediate resistance.</title>
        <authorList>
            <person name="Neoh H.-M."/>
            <person name="Cui L."/>
            <person name="Yuzawa H."/>
            <person name="Takeuchi F."/>
            <person name="Matsuo M."/>
            <person name="Hiramatsu K."/>
        </authorList>
    </citation>
    <scope>NUCLEOTIDE SEQUENCE [LARGE SCALE GENOMIC DNA]</scope>
    <source>
        <strain>Mu3 / ATCC 700698</strain>
    </source>
</reference>
<sequence>MITLYNTLTRQKEVFKPIEPGKVKMYVCGPTVYNYIHIGNARPAINYDVVRRYFEYQGYNVEYVSNFTDVDDKLIKRSQELNQSVPEIAEKYIAAFHEDVGALNVRKATSNPRVMDHMDDIIQFIKDLVDQGYAYESGGDVYFRTRKFEGYGKLSHQSIDDLKVGARIDAGEHKEDALDFTLWKKAKPGEISWNSPFGEGRPGWHIECSVMAFHELGPTIDIHAGGSDLQFPHHENEIAQSEAHNHAPFANYWMHNGFINIDNEKMSKSLGNFILVHDIIKEVDPDVLRFFMISVHYRSPINYNLELVESARSGLERIRNSYQLIEERAQIATNIENQQTYIDQIDAILNRFETVMNDDFNTANAITAWYDLAKLANKYVLENTTSTEVIDKFKAVYQIFSDVLGVPLKSKNADELLDEDVEKLIEERNEARKNKDFARADEIRDMLKSQNIILEDTPQGVRFKRG</sequence>
<protein>
    <recommendedName>
        <fullName evidence="1">Cysteine--tRNA ligase</fullName>
        <ecNumber evidence="1">6.1.1.16</ecNumber>
    </recommendedName>
    <alternativeName>
        <fullName evidence="1">Cysteinyl-tRNA synthetase</fullName>
        <shortName evidence="1">CysRS</shortName>
    </alternativeName>
</protein>
<keyword id="KW-0030">Aminoacyl-tRNA synthetase</keyword>
<keyword id="KW-0067">ATP-binding</keyword>
<keyword id="KW-0963">Cytoplasm</keyword>
<keyword id="KW-0436">Ligase</keyword>
<keyword id="KW-0479">Metal-binding</keyword>
<keyword id="KW-0547">Nucleotide-binding</keyword>
<keyword id="KW-0648">Protein biosynthesis</keyword>
<keyword id="KW-0862">Zinc</keyword>
<evidence type="ECO:0000255" key="1">
    <source>
        <dbReference type="HAMAP-Rule" id="MF_00041"/>
    </source>
</evidence>
<accession>A7WYU7</accession>
<dbReference type="EC" id="6.1.1.16" evidence="1"/>
<dbReference type="EMBL" id="AP009324">
    <property type="protein sequence ID" value="BAF77410.1"/>
    <property type="molecule type" value="Genomic_DNA"/>
</dbReference>
<dbReference type="RefSeq" id="WP_000631969.1">
    <property type="nucleotide sequence ID" value="NC_009782.1"/>
</dbReference>
<dbReference type="SMR" id="A7WYU7"/>
<dbReference type="KEGG" id="saw:SAHV_0527"/>
<dbReference type="HOGENOM" id="CLU_013528_0_1_9"/>
<dbReference type="GO" id="GO:0005829">
    <property type="term" value="C:cytosol"/>
    <property type="evidence" value="ECO:0007669"/>
    <property type="project" value="TreeGrafter"/>
</dbReference>
<dbReference type="GO" id="GO:0005524">
    <property type="term" value="F:ATP binding"/>
    <property type="evidence" value="ECO:0007669"/>
    <property type="project" value="UniProtKB-UniRule"/>
</dbReference>
<dbReference type="GO" id="GO:0004817">
    <property type="term" value="F:cysteine-tRNA ligase activity"/>
    <property type="evidence" value="ECO:0007669"/>
    <property type="project" value="UniProtKB-UniRule"/>
</dbReference>
<dbReference type="GO" id="GO:0008270">
    <property type="term" value="F:zinc ion binding"/>
    <property type="evidence" value="ECO:0007669"/>
    <property type="project" value="UniProtKB-UniRule"/>
</dbReference>
<dbReference type="GO" id="GO:0006423">
    <property type="term" value="P:cysteinyl-tRNA aminoacylation"/>
    <property type="evidence" value="ECO:0007669"/>
    <property type="project" value="UniProtKB-UniRule"/>
</dbReference>
<dbReference type="CDD" id="cd00672">
    <property type="entry name" value="CysRS_core"/>
    <property type="match status" value="1"/>
</dbReference>
<dbReference type="FunFam" id="1.20.120.1910:FF:000002">
    <property type="entry name" value="Cysteine--tRNA ligase"/>
    <property type="match status" value="1"/>
</dbReference>
<dbReference type="FunFam" id="3.40.50.620:FF:000009">
    <property type="entry name" value="Cysteine--tRNA ligase"/>
    <property type="match status" value="1"/>
</dbReference>
<dbReference type="Gene3D" id="1.20.120.1910">
    <property type="entry name" value="Cysteine-tRNA ligase, C-terminal anti-codon recognition domain"/>
    <property type="match status" value="1"/>
</dbReference>
<dbReference type="Gene3D" id="3.40.50.620">
    <property type="entry name" value="HUPs"/>
    <property type="match status" value="1"/>
</dbReference>
<dbReference type="HAMAP" id="MF_00041">
    <property type="entry name" value="Cys_tRNA_synth"/>
    <property type="match status" value="1"/>
</dbReference>
<dbReference type="InterPro" id="IPR015803">
    <property type="entry name" value="Cys-tRNA-ligase"/>
</dbReference>
<dbReference type="InterPro" id="IPR015273">
    <property type="entry name" value="Cys-tRNA-synt_Ia_DALR"/>
</dbReference>
<dbReference type="InterPro" id="IPR024909">
    <property type="entry name" value="Cys-tRNA/MSH_ligase"/>
</dbReference>
<dbReference type="InterPro" id="IPR056411">
    <property type="entry name" value="CysS_C"/>
</dbReference>
<dbReference type="InterPro" id="IPR014729">
    <property type="entry name" value="Rossmann-like_a/b/a_fold"/>
</dbReference>
<dbReference type="InterPro" id="IPR032678">
    <property type="entry name" value="tRNA-synt_1_cat_dom"/>
</dbReference>
<dbReference type="InterPro" id="IPR009080">
    <property type="entry name" value="tRNAsynth_Ia_anticodon-bd"/>
</dbReference>
<dbReference type="NCBIfam" id="TIGR00435">
    <property type="entry name" value="cysS"/>
    <property type="match status" value="1"/>
</dbReference>
<dbReference type="PANTHER" id="PTHR10890:SF3">
    <property type="entry name" value="CYSTEINE--TRNA LIGASE, CYTOPLASMIC"/>
    <property type="match status" value="1"/>
</dbReference>
<dbReference type="PANTHER" id="PTHR10890">
    <property type="entry name" value="CYSTEINYL-TRNA SYNTHETASE"/>
    <property type="match status" value="1"/>
</dbReference>
<dbReference type="Pfam" id="PF23493">
    <property type="entry name" value="CysS_C"/>
    <property type="match status" value="1"/>
</dbReference>
<dbReference type="Pfam" id="PF09190">
    <property type="entry name" value="DALR_2"/>
    <property type="match status" value="1"/>
</dbReference>
<dbReference type="Pfam" id="PF01406">
    <property type="entry name" value="tRNA-synt_1e"/>
    <property type="match status" value="1"/>
</dbReference>
<dbReference type="PRINTS" id="PR00983">
    <property type="entry name" value="TRNASYNTHCYS"/>
</dbReference>
<dbReference type="SMART" id="SM00840">
    <property type="entry name" value="DALR_2"/>
    <property type="match status" value="1"/>
</dbReference>
<dbReference type="SUPFAM" id="SSF47323">
    <property type="entry name" value="Anticodon-binding domain of a subclass of class I aminoacyl-tRNA synthetases"/>
    <property type="match status" value="1"/>
</dbReference>
<dbReference type="SUPFAM" id="SSF52374">
    <property type="entry name" value="Nucleotidylyl transferase"/>
    <property type="match status" value="1"/>
</dbReference>
<gene>
    <name evidence="1" type="primary">cysS</name>
    <name type="ordered locus">SAHV_0527</name>
</gene>
<feature type="chain" id="PRO_1000071076" description="Cysteine--tRNA ligase">
    <location>
        <begin position="1"/>
        <end position="466"/>
    </location>
</feature>
<feature type="short sequence motif" description="'HIGH' region">
    <location>
        <begin position="30"/>
        <end position="40"/>
    </location>
</feature>
<feature type="short sequence motif" description="'KMSKS' region">
    <location>
        <begin position="265"/>
        <end position="269"/>
    </location>
</feature>
<feature type="binding site" evidence="1">
    <location>
        <position position="28"/>
    </location>
    <ligand>
        <name>Zn(2+)</name>
        <dbReference type="ChEBI" id="CHEBI:29105"/>
    </ligand>
</feature>
<feature type="binding site" evidence="1">
    <location>
        <position position="208"/>
    </location>
    <ligand>
        <name>Zn(2+)</name>
        <dbReference type="ChEBI" id="CHEBI:29105"/>
    </ligand>
</feature>
<feature type="binding site" evidence="1">
    <location>
        <position position="233"/>
    </location>
    <ligand>
        <name>Zn(2+)</name>
        <dbReference type="ChEBI" id="CHEBI:29105"/>
    </ligand>
</feature>
<feature type="binding site" evidence="1">
    <location>
        <position position="237"/>
    </location>
    <ligand>
        <name>Zn(2+)</name>
        <dbReference type="ChEBI" id="CHEBI:29105"/>
    </ligand>
</feature>
<feature type="binding site" evidence="1">
    <location>
        <position position="268"/>
    </location>
    <ligand>
        <name>ATP</name>
        <dbReference type="ChEBI" id="CHEBI:30616"/>
    </ligand>
</feature>
<proteinExistence type="inferred from homology"/>